<dbReference type="EC" id="2.7.2.8" evidence="1"/>
<dbReference type="EMBL" id="CP001396">
    <property type="protein sequence ID" value="ACR61914.1"/>
    <property type="molecule type" value="Genomic_DNA"/>
</dbReference>
<dbReference type="RefSeq" id="WP_001302318.1">
    <property type="nucleotide sequence ID" value="NC_012759.1"/>
</dbReference>
<dbReference type="SMR" id="C5A0Q8"/>
<dbReference type="GeneID" id="75203211"/>
<dbReference type="KEGG" id="ebw:BWG_3627"/>
<dbReference type="HOGENOM" id="CLU_053680_1_1_6"/>
<dbReference type="UniPathway" id="UPA00068">
    <property type="reaction ID" value="UER00107"/>
</dbReference>
<dbReference type="GO" id="GO:0005737">
    <property type="term" value="C:cytoplasm"/>
    <property type="evidence" value="ECO:0007669"/>
    <property type="project" value="UniProtKB-SubCell"/>
</dbReference>
<dbReference type="GO" id="GO:0003991">
    <property type="term" value="F:acetylglutamate kinase activity"/>
    <property type="evidence" value="ECO:0007669"/>
    <property type="project" value="UniProtKB-UniRule"/>
</dbReference>
<dbReference type="GO" id="GO:0005524">
    <property type="term" value="F:ATP binding"/>
    <property type="evidence" value="ECO:0007669"/>
    <property type="project" value="UniProtKB-UniRule"/>
</dbReference>
<dbReference type="GO" id="GO:0042450">
    <property type="term" value="P:arginine biosynthetic process via ornithine"/>
    <property type="evidence" value="ECO:0007669"/>
    <property type="project" value="UniProtKB-UniRule"/>
</dbReference>
<dbReference type="GO" id="GO:0006526">
    <property type="term" value="P:L-arginine biosynthetic process"/>
    <property type="evidence" value="ECO:0007669"/>
    <property type="project" value="UniProtKB-UniPathway"/>
</dbReference>
<dbReference type="CDD" id="cd04249">
    <property type="entry name" value="AAK_NAGK-NC"/>
    <property type="match status" value="1"/>
</dbReference>
<dbReference type="FunFam" id="3.40.1160.10:FF:000008">
    <property type="entry name" value="Acetylglutamate kinase"/>
    <property type="match status" value="1"/>
</dbReference>
<dbReference type="Gene3D" id="3.40.1160.10">
    <property type="entry name" value="Acetylglutamate kinase-like"/>
    <property type="match status" value="1"/>
</dbReference>
<dbReference type="HAMAP" id="MF_00082">
    <property type="entry name" value="ArgB"/>
    <property type="match status" value="1"/>
</dbReference>
<dbReference type="InterPro" id="IPR036393">
    <property type="entry name" value="AceGlu_kinase-like_sf"/>
</dbReference>
<dbReference type="InterPro" id="IPR004662">
    <property type="entry name" value="AcgluKinase_fam"/>
</dbReference>
<dbReference type="InterPro" id="IPR037528">
    <property type="entry name" value="ArgB"/>
</dbReference>
<dbReference type="InterPro" id="IPR001048">
    <property type="entry name" value="Asp/Glu/Uridylate_kinase"/>
</dbReference>
<dbReference type="InterPro" id="IPR041731">
    <property type="entry name" value="NAGK-NC"/>
</dbReference>
<dbReference type="NCBIfam" id="TIGR00761">
    <property type="entry name" value="argB"/>
    <property type="match status" value="1"/>
</dbReference>
<dbReference type="PANTHER" id="PTHR23342">
    <property type="entry name" value="N-ACETYLGLUTAMATE SYNTHASE"/>
    <property type="match status" value="1"/>
</dbReference>
<dbReference type="PANTHER" id="PTHR23342:SF0">
    <property type="entry name" value="N-ACETYLGLUTAMATE SYNTHASE, MITOCHONDRIAL"/>
    <property type="match status" value="1"/>
</dbReference>
<dbReference type="Pfam" id="PF00696">
    <property type="entry name" value="AA_kinase"/>
    <property type="match status" value="1"/>
</dbReference>
<dbReference type="PIRSF" id="PIRSF000728">
    <property type="entry name" value="NAGK"/>
    <property type="match status" value="1"/>
</dbReference>
<dbReference type="SUPFAM" id="SSF53633">
    <property type="entry name" value="Carbamate kinase-like"/>
    <property type="match status" value="1"/>
</dbReference>
<protein>
    <recommendedName>
        <fullName evidence="1">Acetylglutamate kinase</fullName>
        <ecNumber evidence="1">2.7.2.8</ecNumber>
    </recommendedName>
    <alternativeName>
        <fullName evidence="1">N-acetyl-L-glutamate 5-phosphotransferase</fullName>
    </alternativeName>
    <alternativeName>
        <fullName evidence="1">NAG kinase</fullName>
        <shortName evidence="1">NAGK</shortName>
    </alternativeName>
</protein>
<name>ARGB_ECOBW</name>
<accession>C5A0Q8</accession>
<keyword id="KW-0028">Amino-acid biosynthesis</keyword>
<keyword id="KW-0055">Arginine biosynthesis</keyword>
<keyword id="KW-0067">ATP-binding</keyword>
<keyword id="KW-0963">Cytoplasm</keyword>
<keyword id="KW-0418">Kinase</keyword>
<keyword id="KW-0547">Nucleotide-binding</keyword>
<keyword id="KW-0808">Transferase</keyword>
<proteinExistence type="inferred from homology"/>
<organism>
    <name type="scientific">Escherichia coli (strain K12 / MC4100 / BW2952)</name>
    <dbReference type="NCBI Taxonomy" id="595496"/>
    <lineage>
        <taxon>Bacteria</taxon>
        <taxon>Pseudomonadati</taxon>
        <taxon>Pseudomonadota</taxon>
        <taxon>Gammaproteobacteria</taxon>
        <taxon>Enterobacterales</taxon>
        <taxon>Enterobacteriaceae</taxon>
        <taxon>Escherichia</taxon>
    </lineage>
</organism>
<evidence type="ECO:0000255" key="1">
    <source>
        <dbReference type="HAMAP-Rule" id="MF_00082"/>
    </source>
</evidence>
<comment type="function">
    <text evidence="1">Catalyzes the ATP-dependent phosphorylation of N-acetyl-L-glutamate.</text>
</comment>
<comment type="catalytic activity">
    <reaction evidence="1">
        <text>N-acetyl-L-glutamate + ATP = N-acetyl-L-glutamyl 5-phosphate + ADP</text>
        <dbReference type="Rhea" id="RHEA:14629"/>
        <dbReference type="ChEBI" id="CHEBI:30616"/>
        <dbReference type="ChEBI" id="CHEBI:44337"/>
        <dbReference type="ChEBI" id="CHEBI:57936"/>
        <dbReference type="ChEBI" id="CHEBI:456216"/>
        <dbReference type="EC" id="2.7.2.8"/>
    </reaction>
</comment>
<comment type="pathway">
    <text evidence="1">Amino-acid biosynthesis; L-arginine biosynthesis; N(2)-acetyl-L-ornithine from L-glutamate: step 2/4.</text>
</comment>
<comment type="subunit">
    <text evidence="1">Homodimer.</text>
</comment>
<comment type="subcellular location">
    <subcellularLocation>
        <location evidence="1">Cytoplasm</location>
    </subcellularLocation>
</comment>
<comment type="similarity">
    <text evidence="1">Belongs to the acetylglutamate kinase family. ArgB subfamily.</text>
</comment>
<feature type="chain" id="PRO_1000202560" description="Acetylglutamate kinase">
    <location>
        <begin position="1"/>
        <end position="258"/>
    </location>
</feature>
<feature type="binding site" evidence="1">
    <location>
        <begin position="44"/>
        <end position="45"/>
    </location>
    <ligand>
        <name>substrate</name>
    </ligand>
</feature>
<feature type="binding site" evidence="1">
    <location>
        <position position="66"/>
    </location>
    <ligand>
        <name>substrate</name>
    </ligand>
</feature>
<feature type="binding site" evidence="1">
    <location>
        <position position="158"/>
    </location>
    <ligand>
        <name>substrate</name>
    </ligand>
</feature>
<feature type="binding site" evidence="1">
    <location>
        <begin position="181"/>
        <end position="186"/>
    </location>
    <ligand>
        <name>ATP</name>
        <dbReference type="ChEBI" id="CHEBI:30616"/>
    </ligand>
</feature>
<feature type="binding site" evidence="1">
    <location>
        <begin position="209"/>
        <end position="211"/>
    </location>
    <ligand>
        <name>ATP</name>
        <dbReference type="ChEBI" id="CHEBI:30616"/>
    </ligand>
</feature>
<feature type="site" description="Transition state stabilizer" evidence="1">
    <location>
        <position position="8"/>
    </location>
</feature>
<feature type="site" description="Transition state stabilizer" evidence="1">
    <location>
        <position position="217"/>
    </location>
</feature>
<sequence length="258" mass="27160">MMNPLIIKLGGVLLDSEEALERLFSALVNYRESHQRPLVIVHGGGCVVDELMKGLNLPVKKKNGLRVTPADQIDIITGALAGTANKTLLAWAKKHQIAAVGLFLGDGDSVKVTQLDEELGHVGLAQPGSPKLINSLLENGYLPVVSSIGVTDEGQLMNVNADQAATALAATLGADLILLSDVSGILDGKGQRIAEMTAAKAEQLIEQGIITDGMIVKVNAALDAARTLGRPVDIASWRHAEQLPALFNGMPMGTRILA</sequence>
<gene>
    <name evidence="1" type="primary">argB</name>
    <name type="ordered locus">BWG_3627</name>
</gene>
<reference key="1">
    <citation type="journal article" date="2009" name="J. Bacteriol.">
        <title>Genomic sequencing reveals regulatory mutations and recombinational events in the widely used MC4100 lineage of Escherichia coli K-12.</title>
        <authorList>
            <person name="Ferenci T."/>
            <person name="Zhou Z."/>
            <person name="Betteridge T."/>
            <person name="Ren Y."/>
            <person name="Liu Y."/>
            <person name="Feng L."/>
            <person name="Reeves P.R."/>
            <person name="Wang L."/>
        </authorList>
    </citation>
    <scope>NUCLEOTIDE SEQUENCE [LARGE SCALE GENOMIC DNA]</scope>
    <source>
        <strain>K12 / MC4100 / BW2952</strain>
    </source>
</reference>